<protein>
    <recommendedName>
        <fullName evidence="1">N-acetyl-gamma-glutamyl-phosphate reductase</fullName>
        <shortName evidence="1">AGPR</shortName>
        <ecNumber evidence="1">1.2.1.38</ecNumber>
    </recommendedName>
    <alternativeName>
        <fullName evidence="1">N-acetyl-glutamate semialdehyde dehydrogenase</fullName>
        <shortName evidence="1">NAGSA dehydrogenase</shortName>
    </alternativeName>
</protein>
<comment type="function">
    <text evidence="1">Catalyzes the NADPH-dependent reduction of N-acetyl-5-glutamyl phosphate to yield N-acetyl-L-glutamate 5-semialdehyde.</text>
</comment>
<comment type="catalytic activity">
    <reaction evidence="1">
        <text>N-acetyl-L-glutamate 5-semialdehyde + phosphate + NADP(+) = N-acetyl-L-glutamyl 5-phosphate + NADPH + H(+)</text>
        <dbReference type="Rhea" id="RHEA:21588"/>
        <dbReference type="ChEBI" id="CHEBI:15378"/>
        <dbReference type="ChEBI" id="CHEBI:29123"/>
        <dbReference type="ChEBI" id="CHEBI:43474"/>
        <dbReference type="ChEBI" id="CHEBI:57783"/>
        <dbReference type="ChEBI" id="CHEBI:57936"/>
        <dbReference type="ChEBI" id="CHEBI:58349"/>
        <dbReference type="EC" id="1.2.1.38"/>
    </reaction>
</comment>
<comment type="pathway">
    <text evidence="1">Amino-acid biosynthesis; L-arginine biosynthesis; N(2)-acetyl-L-ornithine from L-glutamate: step 3/4.</text>
</comment>
<comment type="subcellular location">
    <subcellularLocation>
        <location evidence="1">Cytoplasm</location>
    </subcellularLocation>
</comment>
<comment type="similarity">
    <text evidence="1">Belongs to the NAGSA dehydrogenase family. Type 1 subfamily.</text>
</comment>
<gene>
    <name evidence="1" type="primary">argC</name>
    <name type="ordered locus">Psyr_4569</name>
</gene>
<reference key="1">
    <citation type="journal article" date="2005" name="Proc. Natl. Acad. Sci. U.S.A.">
        <title>Comparison of the complete genome sequences of Pseudomonas syringae pv. syringae B728a and pv. tomato DC3000.</title>
        <authorList>
            <person name="Feil H."/>
            <person name="Feil W.S."/>
            <person name="Chain P."/>
            <person name="Larimer F."/>
            <person name="Dibartolo G."/>
            <person name="Copeland A."/>
            <person name="Lykidis A."/>
            <person name="Trong S."/>
            <person name="Nolan M."/>
            <person name="Goltsman E."/>
            <person name="Thiel J."/>
            <person name="Malfatti S."/>
            <person name="Loper J.E."/>
            <person name="Lapidus A."/>
            <person name="Detter J.C."/>
            <person name="Land M."/>
            <person name="Richardson P.M."/>
            <person name="Kyrpides N.C."/>
            <person name="Ivanova N."/>
            <person name="Lindow S.E."/>
        </authorList>
    </citation>
    <scope>NUCLEOTIDE SEQUENCE [LARGE SCALE GENOMIC DNA]</scope>
    <source>
        <strain>B728a</strain>
    </source>
</reference>
<sequence>MVKVGIVGGTGYTGVELLRLLAQHPQAEVVVITSRSEAGMPVADMYPNLRGHYDGLAFSVPDVKTLGACDVVFFATPHGVAHALAGELLAAGTKVIDLSADFRLQDPVEWAKWYGQPHGAPQLLEDAVYGLPEVNREQIRNARLIAVPGCYPTATQLGFLPLLEAGIADNTRLIADCKSGVSGAGRGLNIGSLYSEANESFKAYAVKGHRHLPEITQGLRRAAGGDIGLTFVPHLVPMIRGIHSTLYATVADRSVDLQALFEKRYADEPFVDVMPAGSHPETRSVRGANVCRIAVHRPQGGDLVVVLSVIDNLVKGASGQAVQNMNILFGLDERAGLSHAGMMP</sequence>
<feature type="chain" id="PRO_1000011045" description="N-acetyl-gamma-glutamyl-phosphate reductase">
    <location>
        <begin position="1"/>
        <end position="344"/>
    </location>
</feature>
<feature type="active site" evidence="1">
    <location>
        <position position="150"/>
    </location>
</feature>
<dbReference type="EC" id="1.2.1.38" evidence="1"/>
<dbReference type="EMBL" id="CP000075">
    <property type="protein sequence ID" value="AAY39599.1"/>
    <property type="molecule type" value="Genomic_DNA"/>
</dbReference>
<dbReference type="RefSeq" id="WP_011269099.1">
    <property type="nucleotide sequence ID" value="NC_007005.1"/>
</dbReference>
<dbReference type="RefSeq" id="YP_237637.1">
    <property type="nucleotide sequence ID" value="NC_007005.1"/>
</dbReference>
<dbReference type="SMR" id="Q4ZMM3"/>
<dbReference type="STRING" id="205918.Psyr_4569"/>
<dbReference type="KEGG" id="psb:Psyr_4569"/>
<dbReference type="PATRIC" id="fig|205918.7.peg.4708"/>
<dbReference type="eggNOG" id="COG0002">
    <property type="taxonomic scope" value="Bacteria"/>
</dbReference>
<dbReference type="HOGENOM" id="CLU_006384_0_1_6"/>
<dbReference type="OrthoDB" id="9801289at2"/>
<dbReference type="UniPathway" id="UPA00068">
    <property type="reaction ID" value="UER00108"/>
</dbReference>
<dbReference type="Proteomes" id="UP000000426">
    <property type="component" value="Chromosome"/>
</dbReference>
<dbReference type="GO" id="GO:0005737">
    <property type="term" value="C:cytoplasm"/>
    <property type="evidence" value="ECO:0007669"/>
    <property type="project" value="UniProtKB-SubCell"/>
</dbReference>
<dbReference type="GO" id="GO:0003942">
    <property type="term" value="F:N-acetyl-gamma-glutamyl-phosphate reductase activity"/>
    <property type="evidence" value="ECO:0007669"/>
    <property type="project" value="UniProtKB-UniRule"/>
</dbReference>
<dbReference type="GO" id="GO:0051287">
    <property type="term" value="F:NAD binding"/>
    <property type="evidence" value="ECO:0007669"/>
    <property type="project" value="InterPro"/>
</dbReference>
<dbReference type="GO" id="GO:0070401">
    <property type="term" value="F:NADP+ binding"/>
    <property type="evidence" value="ECO:0007669"/>
    <property type="project" value="InterPro"/>
</dbReference>
<dbReference type="GO" id="GO:0006526">
    <property type="term" value="P:L-arginine biosynthetic process"/>
    <property type="evidence" value="ECO:0007669"/>
    <property type="project" value="UniProtKB-UniRule"/>
</dbReference>
<dbReference type="CDD" id="cd23934">
    <property type="entry name" value="AGPR_1_C"/>
    <property type="match status" value="1"/>
</dbReference>
<dbReference type="CDD" id="cd17895">
    <property type="entry name" value="AGPR_1_N"/>
    <property type="match status" value="1"/>
</dbReference>
<dbReference type="FunFam" id="3.30.360.10:FF:000014">
    <property type="entry name" value="N-acetyl-gamma-glutamyl-phosphate reductase"/>
    <property type="match status" value="1"/>
</dbReference>
<dbReference type="Gene3D" id="3.30.360.10">
    <property type="entry name" value="Dihydrodipicolinate Reductase, domain 2"/>
    <property type="match status" value="1"/>
</dbReference>
<dbReference type="Gene3D" id="3.40.50.720">
    <property type="entry name" value="NAD(P)-binding Rossmann-like Domain"/>
    <property type="match status" value="1"/>
</dbReference>
<dbReference type="HAMAP" id="MF_00150">
    <property type="entry name" value="ArgC_type1"/>
    <property type="match status" value="1"/>
</dbReference>
<dbReference type="InterPro" id="IPR023013">
    <property type="entry name" value="AGPR_AS"/>
</dbReference>
<dbReference type="InterPro" id="IPR000706">
    <property type="entry name" value="AGPR_type-1"/>
</dbReference>
<dbReference type="InterPro" id="IPR036291">
    <property type="entry name" value="NAD(P)-bd_dom_sf"/>
</dbReference>
<dbReference type="InterPro" id="IPR050085">
    <property type="entry name" value="NAGSA_dehydrogenase"/>
</dbReference>
<dbReference type="InterPro" id="IPR000534">
    <property type="entry name" value="Semialdehyde_DH_NAD-bd"/>
</dbReference>
<dbReference type="NCBIfam" id="TIGR01850">
    <property type="entry name" value="argC"/>
    <property type="match status" value="1"/>
</dbReference>
<dbReference type="PANTHER" id="PTHR32338:SF10">
    <property type="entry name" value="N-ACETYL-GAMMA-GLUTAMYL-PHOSPHATE REDUCTASE, CHLOROPLASTIC-RELATED"/>
    <property type="match status" value="1"/>
</dbReference>
<dbReference type="PANTHER" id="PTHR32338">
    <property type="entry name" value="N-ACETYL-GAMMA-GLUTAMYL-PHOSPHATE REDUCTASE, CHLOROPLASTIC-RELATED-RELATED"/>
    <property type="match status" value="1"/>
</dbReference>
<dbReference type="Pfam" id="PF01118">
    <property type="entry name" value="Semialdhyde_dh"/>
    <property type="match status" value="1"/>
</dbReference>
<dbReference type="Pfam" id="PF22698">
    <property type="entry name" value="Semialdhyde_dhC_1"/>
    <property type="match status" value="1"/>
</dbReference>
<dbReference type="SMART" id="SM00859">
    <property type="entry name" value="Semialdhyde_dh"/>
    <property type="match status" value="1"/>
</dbReference>
<dbReference type="SUPFAM" id="SSF55347">
    <property type="entry name" value="Glyceraldehyde-3-phosphate dehydrogenase-like, C-terminal domain"/>
    <property type="match status" value="1"/>
</dbReference>
<dbReference type="SUPFAM" id="SSF51735">
    <property type="entry name" value="NAD(P)-binding Rossmann-fold domains"/>
    <property type="match status" value="1"/>
</dbReference>
<dbReference type="PROSITE" id="PS01224">
    <property type="entry name" value="ARGC"/>
    <property type="match status" value="1"/>
</dbReference>
<evidence type="ECO:0000255" key="1">
    <source>
        <dbReference type="HAMAP-Rule" id="MF_00150"/>
    </source>
</evidence>
<organism>
    <name type="scientific">Pseudomonas syringae pv. syringae (strain B728a)</name>
    <dbReference type="NCBI Taxonomy" id="205918"/>
    <lineage>
        <taxon>Bacteria</taxon>
        <taxon>Pseudomonadati</taxon>
        <taxon>Pseudomonadota</taxon>
        <taxon>Gammaproteobacteria</taxon>
        <taxon>Pseudomonadales</taxon>
        <taxon>Pseudomonadaceae</taxon>
        <taxon>Pseudomonas</taxon>
        <taxon>Pseudomonas syringae</taxon>
    </lineage>
</organism>
<accession>Q4ZMM3</accession>
<proteinExistence type="inferred from homology"/>
<name>ARGC_PSEU2</name>
<keyword id="KW-0028">Amino-acid biosynthesis</keyword>
<keyword id="KW-0055">Arginine biosynthesis</keyword>
<keyword id="KW-0963">Cytoplasm</keyword>
<keyword id="KW-0521">NADP</keyword>
<keyword id="KW-0560">Oxidoreductase</keyword>